<proteinExistence type="inferred from homology"/>
<gene>
    <name evidence="1" type="primary">mraZ</name>
    <name type="ordered locus">Shewmr7_0377</name>
</gene>
<feature type="chain" id="PRO_1000062937" description="Transcriptional regulator MraZ">
    <location>
        <begin position="1"/>
        <end position="152"/>
    </location>
</feature>
<feature type="domain" description="SpoVT-AbrB 1" evidence="2">
    <location>
        <begin position="5"/>
        <end position="52"/>
    </location>
</feature>
<feature type="domain" description="SpoVT-AbrB 2" evidence="2">
    <location>
        <begin position="81"/>
        <end position="124"/>
    </location>
</feature>
<sequence length="152" mass="17666">MFRGASAINLDTKGRIAIPVRYREPLQLEHQGRIVITVDIQSACLLLYPLHEWELIEAKLLKLSDTDKTQRSLKRMLLGYAHEVELDGNGRILLPPPLRQYANLDKRIMLVGQLNKFELWDEQAWLQQIDECQETIRSEELANNERLADFSL</sequence>
<keyword id="KW-0963">Cytoplasm</keyword>
<keyword id="KW-0238">DNA-binding</keyword>
<keyword id="KW-0677">Repeat</keyword>
<keyword id="KW-0804">Transcription</keyword>
<keyword id="KW-0805">Transcription regulation</keyword>
<reference key="1">
    <citation type="submission" date="2006-08" db="EMBL/GenBank/DDBJ databases">
        <title>Complete sequence of chromosome 1 of Shewanella sp. MR-7.</title>
        <authorList>
            <person name="Copeland A."/>
            <person name="Lucas S."/>
            <person name="Lapidus A."/>
            <person name="Barry K."/>
            <person name="Detter J.C."/>
            <person name="Glavina del Rio T."/>
            <person name="Hammon N."/>
            <person name="Israni S."/>
            <person name="Dalin E."/>
            <person name="Tice H."/>
            <person name="Pitluck S."/>
            <person name="Kiss H."/>
            <person name="Brettin T."/>
            <person name="Bruce D."/>
            <person name="Han C."/>
            <person name="Tapia R."/>
            <person name="Gilna P."/>
            <person name="Schmutz J."/>
            <person name="Larimer F."/>
            <person name="Land M."/>
            <person name="Hauser L."/>
            <person name="Kyrpides N."/>
            <person name="Mikhailova N."/>
            <person name="Nealson K."/>
            <person name="Konstantinidis K."/>
            <person name="Klappenbach J."/>
            <person name="Tiedje J."/>
            <person name="Richardson P."/>
        </authorList>
    </citation>
    <scope>NUCLEOTIDE SEQUENCE [LARGE SCALE GENOMIC DNA]</scope>
    <source>
        <strain>MR-7</strain>
    </source>
</reference>
<name>MRAZ_SHESR</name>
<organism>
    <name type="scientific">Shewanella sp. (strain MR-7)</name>
    <dbReference type="NCBI Taxonomy" id="60481"/>
    <lineage>
        <taxon>Bacteria</taxon>
        <taxon>Pseudomonadati</taxon>
        <taxon>Pseudomonadota</taxon>
        <taxon>Gammaproteobacteria</taxon>
        <taxon>Alteromonadales</taxon>
        <taxon>Shewanellaceae</taxon>
        <taxon>Shewanella</taxon>
    </lineage>
</organism>
<protein>
    <recommendedName>
        <fullName>Transcriptional regulator MraZ</fullName>
    </recommendedName>
</protein>
<dbReference type="EMBL" id="CP000444">
    <property type="protein sequence ID" value="ABI41380.1"/>
    <property type="molecule type" value="Genomic_DNA"/>
</dbReference>
<dbReference type="SMR" id="Q0HZS5"/>
<dbReference type="KEGG" id="shm:Shewmr7_0377"/>
<dbReference type="HOGENOM" id="CLU_107907_2_0_6"/>
<dbReference type="GO" id="GO:0005737">
    <property type="term" value="C:cytoplasm"/>
    <property type="evidence" value="ECO:0007669"/>
    <property type="project" value="UniProtKB-UniRule"/>
</dbReference>
<dbReference type="GO" id="GO:0009295">
    <property type="term" value="C:nucleoid"/>
    <property type="evidence" value="ECO:0007669"/>
    <property type="project" value="UniProtKB-SubCell"/>
</dbReference>
<dbReference type="GO" id="GO:0003700">
    <property type="term" value="F:DNA-binding transcription factor activity"/>
    <property type="evidence" value="ECO:0007669"/>
    <property type="project" value="UniProtKB-UniRule"/>
</dbReference>
<dbReference type="GO" id="GO:0000976">
    <property type="term" value="F:transcription cis-regulatory region binding"/>
    <property type="evidence" value="ECO:0007669"/>
    <property type="project" value="TreeGrafter"/>
</dbReference>
<dbReference type="GO" id="GO:2000143">
    <property type="term" value="P:negative regulation of DNA-templated transcription initiation"/>
    <property type="evidence" value="ECO:0007669"/>
    <property type="project" value="TreeGrafter"/>
</dbReference>
<dbReference type="CDD" id="cd16321">
    <property type="entry name" value="MraZ_C"/>
    <property type="match status" value="1"/>
</dbReference>
<dbReference type="CDD" id="cd16320">
    <property type="entry name" value="MraZ_N"/>
    <property type="match status" value="1"/>
</dbReference>
<dbReference type="FunFam" id="3.40.1550.20:FF:000001">
    <property type="entry name" value="Transcriptional regulator MraZ"/>
    <property type="match status" value="1"/>
</dbReference>
<dbReference type="Gene3D" id="3.40.1550.20">
    <property type="entry name" value="Transcriptional regulator MraZ domain"/>
    <property type="match status" value="1"/>
</dbReference>
<dbReference type="HAMAP" id="MF_01008">
    <property type="entry name" value="MraZ"/>
    <property type="match status" value="1"/>
</dbReference>
<dbReference type="InterPro" id="IPR003444">
    <property type="entry name" value="MraZ"/>
</dbReference>
<dbReference type="InterPro" id="IPR035644">
    <property type="entry name" value="MraZ_C"/>
</dbReference>
<dbReference type="InterPro" id="IPR020603">
    <property type="entry name" value="MraZ_dom"/>
</dbReference>
<dbReference type="InterPro" id="IPR035642">
    <property type="entry name" value="MraZ_N"/>
</dbReference>
<dbReference type="InterPro" id="IPR038619">
    <property type="entry name" value="MraZ_sf"/>
</dbReference>
<dbReference type="InterPro" id="IPR007159">
    <property type="entry name" value="SpoVT-AbrB_dom"/>
</dbReference>
<dbReference type="InterPro" id="IPR037914">
    <property type="entry name" value="SpoVT-AbrB_sf"/>
</dbReference>
<dbReference type="NCBIfam" id="TIGR00242">
    <property type="entry name" value="division/cell wall cluster transcriptional repressor MraZ"/>
    <property type="match status" value="1"/>
</dbReference>
<dbReference type="PANTHER" id="PTHR34701">
    <property type="entry name" value="TRANSCRIPTIONAL REGULATOR MRAZ"/>
    <property type="match status" value="1"/>
</dbReference>
<dbReference type="PANTHER" id="PTHR34701:SF1">
    <property type="entry name" value="TRANSCRIPTIONAL REGULATOR MRAZ"/>
    <property type="match status" value="1"/>
</dbReference>
<dbReference type="Pfam" id="PF02381">
    <property type="entry name" value="MraZ"/>
    <property type="match status" value="2"/>
</dbReference>
<dbReference type="SUPFAM" id="SSF89447">
    <property type="entry name" value="AbrB/MazE/MraZ-like"/>
    <property type="match status" value="1"/>
</dbReference>
<dbReference type="PROSITE" id="PS51740">
    <property type="entry name" value="SPOVT_ABRB"/>
    <property type="match status" value="2"/>
</dbReference>
<evidence type="ECO:0000255" key="1">
    <source>
        <dbReference type="HAMAP-Rule" id="MF_01008"/>
    </source>
</evidence>
<evidence type="ECO:0000255" key="2">
    <source>
        <dbReference type="PROSITE-ProRule" id="PRU01076"/>
    </source>
</evidence>
<accession>Q0HZS5</accession>
<comment type="subunit">
    <text evidence="1">Forms oligomers.</text>
</comment>
<comment type="subcellular location">
    <subcellularLocation>
        <location evidence="1">Cytoplasm</location>
        <location evidence="1">Nucleoid</location>
    </subcellularLocation>
</comment>
<comment type="similarity">
    <text evidence="1">Belongs to the MraZ family.</text>
</comment>